<organism>
    <name type="scientific">Mesostigma viride</name>
    <name type="common">Green alga</name>
    <dbReference type="NCBI Taxonomy" id="41882"/>
    <lineage>
        <taxon>Eukaryota</taxon>
        <taxon>Viridiplantae</taxon>
        <taxon>Streptophyta</taxon>
        <taxon>Mesostigmatophyceae</taxon>
        <taxon>Mesostigmatales</taxon>
        <taxon>Mesostigmataceae</taxon>
        <taxon>Mesostigma</taxon>
    </lineage>
</organism>
<protein>
    <recommendedName>
        <fullName evidence="1">DNA-directed RNA polymerase subunit alpha</fullName>
        <shortName evidence="1">PEP</shortName>
        <ecNumber evidence="1">2.7.7.6</ecNumber>
    </recommendedName>
    <alternativeName>
        <fullName evidence="1">Plastid-encoded RNA polymerase subunit alpha</fullName>
        <shortName evidence="1">RNA polymerase subunit alpha</shortName>
    </alternativeName>
</protein>
<keyword id="KW-0150">Chloroplast</keyword>
<keyword id="KW-0240">DNA-directed RNA polymerase</keyword>
<keyword id="KW-0548">Nucleotidyltransferase</keyword>
<keyword id="KW-0934">Plastid</keyword>
<keyword id="KW-0804">Transcription</keyword>
<keyword id="KW-0808">Transferase</keyword>
<feature type="chain" id="PRO_0000175471" description="DNA-directed RNA polymerase subunit alpha">
    <location>
        <begin position="1"/>
        <end position="316"/>
    </location>
</feature>
<feature type="region of interest" description="Alpha N-terminal domain (alpha-NTD)" evidence="1">
    <location>
        <begin position="1"/>
        <end position="232"/>
    </location>
</feature>
<feature type="region of interest" description="Alpha C-terminal domain (alpha-CTD)" evidence="1">
    <location>
        <begin position="247"/>
        <end position="316"/>
    </location>
</feature>
<accession>Q9MUV0</accession>
<gene>
    <name evidence="1" type="primary">rpoA</name>
</gene>
<dbReference type="EC" id="2.7.7.6" evidence="1"/>
<dbReference type="EMBL" id="AF166114">
    <property type="protein sequence ID" value="AAF43801.1"/>
    <property type="molecule type" value="Genomic_DNA"/>
</dbReference>
<dbReference type="RefSeq" id="NP_038360.1">
    <property type="nucleotide sequence ID" value="NC_002186.1"/>
</dbReference>
<dbReference type="SMR" id="Q9MUV0"/>
<dbReference type="GeneID" id="800911"/>
<dbReference type="GO" id="GO:0009507">
    <property type="term" value="C:chloroplast"/>
    <property type="evidence" value="ECO:0007669"/>
    <property type="project" value="UniProtKB-SubCell"/>
</dbReference>
<dbReference type="GO" id="GO:0000428">
    <property type="term" value="C:DNA-directed RNA polymerase complex"/>
    <property type="evidence" value="ECO:0007669"/>
    <property type="project" value="UniProtKB-KW"/>
</dbReference>
<dbReference type="GO" id="GO:0005739">
    <property type="term" value="C:mitochondrion"/>
    <property type="evidence" value="ECO:0007669"/>
    <property type="project" value="GOC"/>
</dbReference>
<dbReference type="GO" id="GO:0003677">
    <property type="term" value="F:DNA binding"/>
    <property type="evidence" value="ECO:0007669"/>
    <property type="project" value="UniProtKB-UniRule"/>
</dbReference>
<dbReference type="GO" id="GO:0003899">
    <property type="term" value="F:DNA-directed RNA polymerase activity"/>
    <property type="evidence" value="ECO:0007669"/>
    <property type="project" value="UniProtKB-UniRule"/>
</dbReference>
<dbReference type="GO" id="GO:0046983">
    <property type="term" value="F:protein dimerization activity"/>
    <property type="evidence" value="ECO:0007669"/>
    <property type="project" value="InterPro"/>
</dbReference>
<dbReference type="GO" id="GO:0006351">
    <property type="term" value="P:DNA-templated transcription"/>
    <property type="evidence" value="ECO:0007669"/>
    <property type="project" value="UniProtKB-UniRule"/>
</dbReference>
<dbReference type="CDD" id="cd06928">
    <property type="entry name" value="RNAP_alpha_NTD"/>
    <property type="match status" value="1"/>
</dbReference>
<dbReference type="FunFam" id="2.170.120.12:FF:000001">
    <property type="entry name" value="DNA-directed RNA polymerase subunit alpha"/>
    <property type="match status" value="1"/>
</dbReference>
<dbReference type="Gene3D" id="1.10.150.20">
    <property type="entry name" value="5' to 3' exonuclease, C-terminal subdomain"/>
    <property type="match status" value="1"/>
</dbReference>
<dbReference type="Gene3D" id="2.170.120.12">
    <property type="entry name" value="DNA-directed RNA polymerase, insert domain"/>
    <property type="match status" value="1"/>
</dbReference>
<dbReference type="Gene3D" id="3.30.1360.10">
    <property type="entry name" value="RNA polymerase, RBP11-like subunit"/>
    <property type="match status" value="1"/>
</dbReference>
<dbReference type="HAMAP" id="MF_00059">
    <property type="entry name" value="RNApol_bact_RpoA"/>
    <property type="match status" value="1"/>
</dbReference>
<dbReference type="InterPro" id="IPR011262">
    <property type="entry name" value="DNA-dir_RNA_pol_insert"/>
</dbReference>
<dbReference type="InterPro" id="IPR011263">
    <property type="entry name" value="DNA-dir_RNA_pol_RpoA/D/Rpb3"/>
</dbReference>
<dbReference type="InterPro" id="IPR011773">
    <property type="entry name" value="DNA-dir_RpoA"/>
</dbReference>
<dbReference type="InterPro" id="IPR036603">
    <property type="entry name" value="RBP11-like"/>
</dbReference>
<dbReference type="InterPro" id="IPR011260">
    <property type="entry name" value="RNAP_asu_C"/>
</dbReference>
<dbReference type="InterPro" id="IPR036643">
    <property type="entry name" value="RNApol_insert_sf"/>
</dbReference>
<dbReference type="NCBIfam" id="NF003516">
    <property type="entry name" value="PRK05182.2-2"/>
    <property type="match status" value="1"/>
</dbReference>
<dbReference type="NCBIfam" id="NF003519">
    <property type="entry name" value="PRK05182.2-5"/>
    <property type="match status" value="1"/>
</dbReference>
<dbReference type="NCBIfam" id="TIGR02027">
    <property type="entry name" value="rpoA"/>
    <property type="match status" value="1"/>
</dbReference>
<dbReference type="Pfam" id="PF01000">
    <property type="entry name" value="RNA_pol_A_bac"/>
    <property type="match status" value="1"/>
</dbReference>
<dbReference type="Pfam" id="PF03118">
    <property type="entry name" value="RNA_pol_A_CTD"/>
    <property type="match status" value="1"/>
</dbReference>
<dbReference type="Pfam" id="PF01193">
    <property type="entry name" value="RNA_pol_L"/>
    <property type="match status" value="1"/>
</dbReference>
<dbReference type="SMART" id="SM00662">
    <property type="entry name" value="RPOLD"/>
    <property type="match status" value="1"/>
</dbReference>
<dbReference type="SUPFAM" id="SSF47789">
    <property type="entry name" value="C-terminal domain of RNA polymerase alpha subunit"/>
    <property type="match status" value="1"/>
</dbReference>
<dbReference type="SUPFAM" id="SSF56553">
    <property type="entry name" value="Insert subdomain of RNA polymerase alpha subunit"/>
    <property type="match status" value="1"/>
</dbReference>
<dbReference type="SUPFAM" id="SSF55257">
    <property type="entry name" value="RBP11-like subunits of RNA polymerase"/>
    <property type="match status" value="1"/>
</dbReference>
<geneLocation type="chloroplast"/>
<comment type="function">
    <text evidence="1">DNA-dependent RNA polymerase catalyzes the transcription of DNA into RNA using the four ribonucleoside triphosphates as substrates.</text>
</comment>
<comment type="catalytic activity">
    <reaction evidence="1">
        <text>RNA(n) + a ribonucleoside 5'-triphosphate = RNA(n+1) + diphosphate</text>
        <dbReference type="Rhea" id="RHEA:21248"/>
        <dbReference type="Rhea" id="RHEA-COMP:14527"/>
        <dbReference type="Rhea" id="RHEA-COMP:17342"/>
        <dbReference type="ChEBI" id="CHEBI:33019"/>
        <dbReference type="ChEBI" id="CHEBI:61557"/>
        <dbReference type="ChEBI" id="CHEBI:140395"/>
        <dbReference type="EC" id="2.7.7.6"/>
    </reaction>
</comment>
<comment type="subunit">
    <text evidence="1">In plastids the minimal PEP RNA polymerase catalytic core is composed of four subunits: alpha, beta, beta', and beta''. When a (nuclear-encoded) sigma factor is associated with the core the holoenzyme is formed, which can initiate transcription.</text>
</comment>
<comment type="subcellular location">
    <subcellularLocation>
        <location>Plastid</location>
        <location>Chloroplast</location>
    </subcellularLocation>
</comment>
<comment type="domain">
    <text evidence="1">The N-terminal domain is essential for RNAP assembly and basal transcription, whereas the C-terminal domain is involved in interaction with transcriptional regulators and with upstream promoter elements.</text>
</comment>
<comment type="similarity">
    <text evidence="1">Belongs to the RNA polymerase alpha chain family.</text>
</comment>
<name>RPOA_MESVI</name>
<proteinExistence type="inferred from homology"/>
<reference key="1">
    <citation type="journal article" date="2000" name="Nature">
        <title>Ancestral chloroplast genome in Mesostigma viride reveals an early branch of green plant evolution.</title>
        <authorList>
            <person name="Lemieux C."/>
            <person name="Otis C."/>
            <person name="Turmel M."/>
        </authorList>
    </citation>
    <scope>NUCLEOTIDE SEQUENCE [LARGE SCALE GENOMIC DNA]</scope>
    <source>
        <strain>NIES-296 / KY-14 / CCMP 2046</strain>
    </source>
</reference>
<evidence type="ECO:0000255" key="1">
    <source>
        <dbReference type="HAMAP-Rule" id="MF_00059"/>
    </source>
</evidence>
<sequence length="316" mass="35350">MSGNDLFPSTIYCIESKIESPRNLYGRFLIEPLAIGQGITVGNTLRRILLGDIEGAAITSVKIPGANNEFSILPGIRESVLEILLNLKEIVFRTKSLDVQKGYLSIQGPCVVKAANLQLPTSIEVVDGGQYIATLSGNANLDMEFVINTGKGYQMADYAIKKNSYISSLPVDAIFMPIHKVNYMVEQDHTSKFLTERVILEIWTNGSISPRDALDIGIKKVIDLFNPLHHCSSEYSTNKNDFSTESKINDILVEELELSVRAYNCLKRAQIHTISDLLAYSQEDLLEIKNFGRRSAEEVIEALEKKLNIYLPKEKY</sequence>